<organism>
    <name type="scientific">Xylella fastidiosa (strain 9a5c)</name>
    <dbReference type="NCBI Taxonomy" id="160492"/>
    <lineage>
        <taxon>Bacteria</taxon>
        <taxon>Pseudomonadati</taxon>
        <taxon>Pseudomonadota</taxon>
        <taxon>Gammaproteobacteria</taxon>
        <taxon>Lysobacterales</taxon>
        <taxon>Lysobacteraceae</taxon>
        <taxon>Xylella</taxon>
    </lineage>
</organism>
<gene>
    <name evidence="1" type="primary">trhO</name>
    <name type="ordered locus">XF_2609</name>
</gene>
<evidence type="ECO:0000255" key="1">
    <source>
        <dbReference type="HAMAP-Rule" id="MF_00469"/>
    </source>
</evidence>
<evidence type="ECO:0000305" key="2"/>
<keyword id="KW-0560">Oxidoreductase</keyword>
<keyword id="KW-0819">tRNA processing</keyword>
<accession>Q9PAA9</accession>
<proteinExistence type="inferred from homology"/>
<comment type="function">
    <text evidence="1">Catalyzes oxygen-dependent 5-hydroxyuridine (ho5U) modification at position 34 in tRNAs.</text>
</comment>
<comment type="catalytic activity">
    <reaction evidence="1">
        <text>uridine(34) in tRNA + AH2 + O2 = 5-hydroxyuridine(34) in tRNA + A + H2O</text>
        <dbReference type="Rhea" id="RHEA:64224"/>
        <dbReference type="Rhea" id="RHEA-COMP:11727"/>
        <dbReference type="Rhea" id="RHEA-COMP:13381"/>
        <dbReference type="ChEBI" id="CHEBI:13193"/>
        <dbReference type="ChEBI" id="CHEBI:15377"/>
        <dbReference type="ChEBI" id="CHEBI:15379"/>
        <dbReference type="ChEBI" id="CHEBI:17499"/>
        <dbReference type="ChEBI" id="CHEBI:65315"/>
        <dbReference type="ChEBI" id="CHEBI:136877"/>
    </reaction>
</comment>
<comment type="similarity">
    <text evidence="1">Belongs to the TrhO family.</text>
</comment>
<comment type="sequence caution" evidence="2">
    <conflict type="erroneous initiation">
        <sequence resource="EMBL-CDS" id="AAF85406"/>
    </conflict>
</comment>
<name>TRHO_XYLFA</name>
<dbReference type="EC" id="1.14.-.-" evidence="1"/>
<dbReference type="EMBL" id="AE003849">
    <property type="protein sequence ID" value="AAF85406.1"/>
    <property type="status" value="ALT_INIT"/>
    <property type="molecule type" value="Genomic_DNA"/>
</dbReference>
<dbReference type="PIR" id="B82535">
    <property type="entry name" value="B82535"/>
</dbReference>
<dbReference type="RefSeq" id="WP_031337128.1">
    <property type="nucleotide sequence ID" value="NC_002488.3"/>
</dbReference>
<dbReference type="SMR" id="Q9PAA9"/>
<dbReference type="STRING" id="160492.XF_2609"/>
<dbReference type="KEGG" id="xfa:XF_2609"/>
<dbReference type="eggNOG" id="COG1054">
    <property type="taxonomic scope" value="Bacteria"/>
</dbReference>
<dbReference type="HOGENOM" id="CLU_038878_0_1_6"/>
<dbReference type="Proteomes" id="UP000000812">
    <property type="component" value="Chromosome"/>
</dbReference>
<dbReference type="GO" id="GO:0016705">
    <property type="term" value="F:oxidoreductase activity, acting on paired donors, with incorporation or reduction of molecular oxygen"/>
    <property type="evidence" value="ECO:0007669"/>
    <property type="project" value="UniProtKB-UniRule"/>
</dbReference>
<dbReference type="GO" id="GO:0006400">
    <property type="term" value="P:tRNA modification"/>
    <property type="evidence" value="ECO:0007669"/>
    <property type="project" value="UniProtKB-UniRule"/>
</dbReference>
<dbReference type="Gene3D" id="3.30.70.100">
    <property type="match status" value="1"/>
</dbReference>
<dbReference type="Gene3D" id="3.40.250.10">
    <property type="entry name" value="Rhodanese-like domain"/>
    <property type="match status" value="1"/>
</dbReference>
<dbReference type="HAMAP" id="MF_00469">
    <property type="entry name" value="TrhO"/>
    <property type="match status" value="1"/>
</dbReference>
<dbReference type="InterPro" id="IPR001763">
    <property type="entry name" value="Rhodanese-like_dom"/>
</dbReference>
<dbReference type="InterPro" id="IPR036873">
    <property type="entry name" value="Rhodanese-like_dom_sf"/>
</dbReference>
<dbReference type="InterPro" id="IPR020936">
    <property type="entry name" value="TrhO"/>
</dbReference>
<dbReference type="InterPro" id="IPR040503">
    <property type="entry name" value="TRHO_N"/>
</dbReference>
<dbReference type="NCBIfam" id="NF003703">
    <property type="entry name" value="PRK05320.1"/>
    <property type="match status" value="1"/>
</dbReference>
<dbReference type="PANTHER" id="PTHR43268:SF3">
    <property type="entry name" value="RHODANESE-LIKE DOMAIN-CONTAINING PROTEIN 7-RELATED"/>
    <property type="match status" value="1"/>
</dbReference>
<dbReference type="PANTHER" id="PTHR43268">
    <property type="entry name" value="THIOSULFATE SULFURTRANSFERASE/RHODANESE-LIKE DOMAIN-CONTAINING PROTEIN 2"/>
    <property type="match status" value="1"/>
</dbReference>
<dbReference type="Pfam" id="PF00581">
    <property type="entry name" value="Rhodanese"/>
    <property type="match status" value="1"/>
</dbReference>
<dbReference type="Pfam" id="PF17773">
    <property type="entry name" value="UPF0176_N"/>
    <property type="match status" value="1"/>
</dbReference>
<dbReference type="SMART" id="SM00450">
    <property type="entry name" value="RHOD"/>
    <property type="match status" value="1"/>
</dbReference>
<dbReference type="SUPFAM" id="SSF52821">
    <property type="entry name" value="Rhodanese/Cell cycle control phosphatase"/>
    <property type="match status" value="1"/>
</dbReference>
<dbReference type="PROSITE" id="PS50206">
    <property type="entry name" value="RHODANESE_3"/>
    <property type="match status" value="1"/>
</dbReference>
<sequence length="257" mass="28440">MVIINTAAYHFVSITQPQTLADQIRAHGEIAGLKGTVLIANEGINLFLAGEKEAINAFYAWLCADVRFAALHVKYSVSAYKPFARFKVKVRPEIISFRRGDISPLQGRAPGVSAHTLRDWLRRGCDDNGRRLVMLDARNQQEIAYGTFSGAMTLPITKFTGFPGALAHYRDLLSDATVVSFCTGGIRCEKAVLWMRVDGMDNVLQLEGGILGYFEQVGGEGYDGRCFVFDKRVALDPQLRPLNDMRVVASFARSEIS</sequence>
<reference key="1">
    <citation type="journal article" date="2000" name="Nature">
        <title>The genome sequence of the plant pathogen Xylella fastidiosa.</title>
        <authorList>
            <person name="Simpson A.J.G."/>
            <person name="Reinach F.C."/>
            <person name="Arruda P."/>
            <person name="Abreu F.A."/>
            <person name="Acencio M."/>
            <person name="Alvarenga R."/>
            <person name="Alves L.M.C."/>
            <person name="Araya J.E."/>
            <person name="Baia G.S."/>
            <person name="Baptista C.S."/>
            <person name="Barros M.H."/>
            <person name="Bonaccorsi E.D."/>
            <person name="Bordin S."/>
            <person name="Bove J.M."/>
            <person name="Briones M.R.S."/>
            <person name="Bueno M.R.P."/>
            <person name="Camargo A.A."/>
            <person name="Camargo L.E.A."/>
            <person name="Carraro D.M."/>
            <person name="Carrer H."/>
            <person name="Colauto N.B."/>
            <person name="Colombo C."/>
            <person name="Costa F.F."/>
            <person name="Costa M.C.R."/>
            <person name="Costa-Neto C.M."/>
            <person name="Coutinho L.L."/>
            <person name="Cristofani M."/>
            <person name="Dias-Neto E."/>
            <person name="Docena C."/>
            <person name="El-Dorry H."/>
            <person name="Facincani A.P."/>
            <person name="Ferreira A.J.S."/>
            <person name="Ferreira V.C.A."/>
            <person name="Ferro J.A."/>
            <person name="Fraga J.S."/>
            <person name="Franca S.C."/>
            <person name="Franco M.C."/>
            <person name="Frohme M."/>
            <person name="Furlan L.R."/>
            <person name="Garnier M."/>
            <person name="Goldman G.H."/>
            <person name="Goldman M.H.S."/>
            <person name="Gomes S.L."/>
            <person name="Gruber A."/>
            <person name="Ho P.L."/>
            <person name="Hoheisel J.D."/>
            <person name="Junqueira M.L."/>
            <person name="Kemper E.L."/>
            <person name="Kitajima J.P."/>
            <person name="Krieger J.E."/>
            <person name="Kuramae E.E."/>
            <person name="Laigret F."/>
            <person name="Lambais M.R."/>
            <person name="Leite L.C.C."/>
            <person name="Lemos E.G.M."/>
            <person name="Lemos M.V.F."/>
            <person name="Lopes S.A."/>
            <person name="Lopes C.R."/>
            <person name="Machado J.A."/>
            <person name="Machado M.A."/>
            <person name="Madeira A.M.B.N."/>
            <person name="Madeira H.M.F."/>
            <person name="Marino C.L."/>
            <person name="Marques M.V."/>
            <person name="Martins E.A.L."/>
            <person name="Martins E.M.F."/>
            <person name="Matsukuma A.Y."/>
            <person name="Menck C.F.M."/>
            <person name="Miracca E.C."/>
            <person name="Miyaki C.Y."/>
            <person name="Monteiro-Vitorello C.B."/>
            <person name="Moon D.H."/>
            <person name="Nagai M.A."/>
            <person name="Nascimento A.L.T.O."/>
            <person name="Netto L.E.S."/>
            <person name="Nhani A. Jr."/>
            <person name="Nobrega F.G."/>
            <person name="Nunes L.R."/>
            <person name="Oliveira M.A."/>
            <person name="de Oliveira M.C."/>
            <person name="de Oliveira R.C."/>
            <person name="Palmieri D.A."/>
            <person name="Paris A."/>
            <person name="Peixoto B.R."/>
            <person name="Pereira G.A.G."/>
            <person name="Pereira H.A. Jr."/>
            <person name="Pesquero J.B."/>
            <person name="Quaggio R.B."/>
            <person name="Roberto P.G."/>
            <person name="Rodrigues V."/>
            <person name="de Rosa A.J.M."/>
            <person name="de Rosa V.E. Jr."/>
            <person name="de Sa R.G."/>
            <person name="Santelli R.V."/>
            <person name="Sawasaki H.E."/>
            <person name="da Silva A.C.R."/>
            <person name="da Silva A.M."/>
            <person name="da Silva F.R."/>
            <person name="Silva W.A. Jr."/>
            <person name="da Silveira J.F."/>
            <person name="Silvestri M.L.Z."/>
            <person name="Siqueira W.J."/>
            <person name="de Souza A.A."/>
            <person name="de Souza A.P."/>
            <person name="Terenzi M.F."/>
            <person name="Truffi D."/>
            <person name="Tsai S.M."/>
            <person name="Tsuhako M.H."/>
            <person name="Vallada H."/>
            <person name="Van Sluys M.A."/>
            <person name="Verjovski-Almeida S."/>
            <person name="Vettore A.L."/>
            <person name="Zago M.A."/>
            <person name="Zatz M."/>
            <person name="Meidanis J."/>
            <person name="Setubal J.C."/>
        </authorList>
    </citation>
    <scope>NUCLEOTIDE SEQUENCE [LARGE SCALE GENOMIC DNA]</scope>
    <source>
        <strain>9a5c</strain>
    </source>
</reference>
<protein>
    <recommendedName>
        <fullName evidence="1">tRNA uridine(34) hydroxylase</fullName>
        <ecNumber evidence="1">1.14.-.-</ecNumber>
    </recommendedName>
    <alternativeName>
        <fullName evidence="1">tRNA hydroxylation protein O</fullName>
    </alternativeName>
</protein>
<feature type="chain" id="PRO_0000161541" description="tRNA uridine(34) hydroxylase">
    <location>
        <begin position="1"/>
        <end position="257"/>
    </location>
</feature>
<feature type="domain" description="Rhodanese" evidence="1">
    <location>
        <begin position="128"/>
        <end position="222"/>
    </location>
</feature>
<feature type="active site" description="Cysteine persulfide intermediate" evidence="1">
    <location>
        <position position="182"/>
    </location>
</feature>